<accession>Q63C03</accession>
<protein>
    <recommendedName>
        <fullName evidence="1">Bacilliredoxin BCE33L1972</fullName>
    </recommendedName>
</protein>
<gene>
    <name type="ordered locus">BCE33L1972</name>
</gene>
<proteinExistence type="inferred from homology"/>
<sequence>MSNAYEEYMRQMVIPMRQELVRSGFEELTTEEAVTEFMENTTGTTLVVVNSVCGCAAGLARPSAGQAVVRAEKQPDHLVTVFAGQDKDATAKMREYFGEIPPSSPSMALLKGKEVVHFIHRHEIEGATMDEIITNLEQAFEKNC</sequence>
<comment type="similarity">
    <text evidence="1">Belongs to the bacilliredoxin family.</text>
</comment>
<name>Y1972_BACCZ</name>
<reference key="1">
    <citation type="journal article" date="2006" name="J. Bacteriol.">
        <title>Pathogenomic sequence analysis of Bacillus cereus and Bacillus thuringiensis isolates closely related to Bacillus anthracis.</title>
        <authorList>
            <person name="Han C.S."/>
            <person name="Xie G."/>
            <person name="Challacombe J.F."/>
            <person name="Altherr M.R."/>
            <person name="Bhotika S.S."/>
            <person name="Bruce D."/>
            <person name="Campbell C.S."/>
            <person name="Campbell M.L."/>
            <person name="Chen J."/>
            <person name="Chertkov O."/>
            <person name="Cleland C."/>
            <person name="Dimitrijevic M."/>
            <person name="Doggett N.A."/>
            <person name="Fawcett J.J."/>
            <person name="Glavina T."/>
            <person name="Goodwin L.A."/>
            <person name="Hill K.K."/>
            <person name="Hitchcock P."/>
            <person name="Jackson P.J."/>
            <person name="Keim P."/>
            <person name="Kewalramani A.R."/>
            <person name="Longmire J."/>
            <person name="Lucas S."/>
            <person name="Malfatti S."/>
            <person name="McMurry K."/>
            <person name="Meincke L.J."/>
            <person name="Misra M."/>
            <person name="Moseman B.L."/>
            <person name="Mundt M."/>
            <person name="Munk A.C."/>
            <person name="Okinaka R.T."/>
            <person name="Parson-Quintana B."/>
            <person name="Reilly L.P."/>
            <person name="Richardson P."/>
            <person name="Robinson D.L."/>
            <person name="Rubin E."/>
            <person name="Saunders E."/>
            <person name="Tapia R."/>
            <person name="Tesmer J.G."/>
            <person name="Thayer N."/>
            <person name="Thompson L.S."/>
            <person name="Tice H."/>
            <person name="Ticknor L.O."/>
            <person name="Wills P.L."/>
            <person name="Brettin T.S."/>
            <person name="Gilna P."/>
        </authorList>
    </citation>
    <scope>NUCLEOTIDE SEQUENCE [LARGE SCALE GENOMIC DNA]</scope>
    <source>
        <strain>ZK / E33L</strain>
    </source>
</reference>
<evidence type="ECO:0000305" key="1"/>
<dbReference type="EMBL" id="CP000001">
    <property type="protein sequence ID" value="AAU18284.1"/>
    <property type="molecule type" value="Genomic_DNA"/>
</dbReference>
<dbReference type="RefSeq" id="WP_000063712.1">
    <property type="nucleotide sequence ID" value="NZ_CP009968.1"/>
</dbReference>
<dbReference type="SMR" id="Q63C03"/>
<dbReference type="KEGG" id="bcz:BCE33L1972"/>
<dbReference type="PATRIC" id="fig|288681.22.peg.3552"/>
<dbReference type="Proteomes" id="UP000002612">
    <property type="component" value="Chromosome"/>
</dbReference>
<dbReference type="GO" id="GO:0045454">
    <property type="term" value="P:cell redox homeostasis"/>
    <property type="evidence" value="ECO:0000250"/>
    <property type="project" value="UniProtKB"/>
</dbReference>
<dbReference type="Gene3D" id="6.10.250.2150">
    <property type="match status" value="1"/>
</dbReference>
<dbReference type="Gene3D" id="3.40.30.10">
    <property type="entry name" value="Glutaredoxin"/>
    <property type="match status" value="1"/>
</dbReference>
<dbReference type="InterPro" id="IPR009474">
    <property type="entry name" value="BrxB/BrxA"/>
</dbReference>
<dbReference type="NCBIfam" id="TIGR04191">
    <property type="entry name" value="YphP_YqiW"/>
    <property type="match status" value="1"/>
</dbReference>
<dbReference type="PANTHER" id="PTHR40052:SF2">
    <property type="entry name" value="BACILLIREDOXIN BRXA"/>
    <property type="match status" value="1"/>
</dbReference>
<dbReference type="PANTHER" id="PTHR40052">
    <property type="entry name" value="UPF0403 PROTEIN YQIW-RELATED"/>
    <property type="match status" value="1"/>
</dbReference>
<dbReference type="Pfam" id="PF06491">
    <property type="entry name" value="Disulph_isomer"/>
    <property type="match status" value="1"/>
</dbReference>
<feature type="chain" id="PRO_0000271979" description="Bacilliredoxin BCE33L1972">
    <location>
        <begin position="1"/>
        <end position="144"/>
    </location>
</feature>
<organism>
    <name type="scientific">Bacillus cereus (strain ZK / E33L)</name>
    <dbReference type="NCBI Taxonomy" id="288681"/>
    <lineage>
        <taxon>Bacteria</taxon>
        <taxon>Bacillati</taxon>
        <taxon>Bacillota</taxon>
        <taxon>Bacilli</taxon>
        <taxon>Bacillales</taxon>
        <taxon>Bacillaceae</taxon>
        <taxon>Bacillus</taxon>
        <taxon>Bacillus cereus group</taxon>
    </lineage>
</organism>